<feature type="chain" id="PRO_1000123614" description="Translational regulator CsrA">
    <location>
        <begin position="1"/>
        <end position="77"/>
    </location>
</feature>
<accession>B8HEI6</accession>
<comment type="function">
    <text evidence="1">A translational regulator that binds mRNA to regulate translation initiation and/or mRNA stability. Usually binds in the 5'-UTR at or near the Shine-Dalgarno sequence preventing ribosome-binding, thus repressing translation. Its main target seems to be the major flagellin gene, while its function is anatagonized by FliW.</text>
</comment>
<comment type="subunit">
    <text evidence="1">Homodimer; the beta-strands of each monomer intercalate to form a hydrophobic core, while the alpha-helices form wings that extend away from the core.</text>
</comment>
<comment type="subcellular location">
    <subcellularLocation>
        <location evidence="1">Cytoplasm</location>
    </subcellularLocation>
</comment>
<comment type="similarity">
    <text evidence="1">Belongs to the CsrA/RsmA family.</text>
</comment>
<organism>
    <name type="scientific">Pseudarthrobacter chlorophenolicus (strain ATCC 700700 / DSM 12829 / CIP 107037 / JCM 12360 / KCTC 9906 / NCIMB 13794 / A6)</name>
    <name type="common">Arthrobacter chlorophenolicus</name>
    <dbReference type="NCBI Taxonomy" id="452863"/>
    <lineage>
        <taxon>Bacteria</taxon>
        <taxon>Bacillati</taxon>
        <taxon>Actinomycetota</taxon>
        <taxon>Actinomycetes</taxon>
        <taxon>Micrococcales</taxon>
        <taxon>Micrococcaceae</taxon>
        <taxon>Pseudarthrobacter</taxon>
    </lineage>
</organism>
<gene>
    <name evidence="1" type="primary">csrA</name>
    <name type="ordered locus">Achl_2970</name>
</gene>
<evidence type="ECO:0000255" key="1">
    <source>
        <dbReference type="HAMAP-Rule" id="MF_00167"/>
    </source>
</evidence>
<protein>
    <recommendedName>
        <fullName evidence="1">Translational regulator CsrA</fullName>
    </recommendedName>
</protein>
<proteinExistence type="inferred from homology"/>
<dbReference type="EMBL" id="CP001341">
    <property type="protein sequence ID" value="ACL40931.1"/>
    <property type="molecule type" value="Genomic_DNA"/>
</dbReference>
<dbReference type="RefSeq" id="WP_015938127.1">
    <property type="nucleotide sequence ID" value="NC_011886.1"/>
</dbReference>
<dbReference type="SMR" id="B8HEI6"/>
<dbReference type="STRING" id="452863.Achl_2970"/>
<dbReference type="KEGG" id="ach:Achl_2970"/>
<dbReference type="eggNOG" id="COG1551">
    <property type="taxonomic scope" value="Bacteria"/>
</dbReference>
<dbReference type="HOGENOM" id="CLU_164837_0_2_11"/>
<dbReference type="OrthoDB" id="9809061at2"/>
<dbReference type="Proteomes" id="UP000002505">
    <property type="component" value="Chromosome"/>
</dbReference>
<dbReference type="GO" id="GO:0005829">
    <property type="term" value="C:cytosol"/>
    <property type="evidence" value="ECO:0007669"/>
    <property type="project" value="TreeGrafter"/>
</dbReference>
<dbReference type="GO" id="GO:0048027">
    <property type="term" value="F:mRNA 5'-UTR binding"/>
    <property type="evidence" value="ECO:0007669"/>
    <property type="project" value="UniProtKB-UniRule"/>
</dbReference>
<dbReference type="GO" id="GO:0044781">
    <property type="term" value="P:bacterial-type flagellum organization"/>
    <property type="evidence" value="ECO:0007669"/>
    <property type="project" value="UniProtKB-KW"/>
</dbReference>
<dbReference type="GO" id="GO:0006402">
    <property type="term" value="P:mRNA catabolic process"/>
    <property type="evidence" value="ECO:0007669"/>
    <property type="project" value="InterPro"/>
</dbReference>
<dbReference type="GO" id="GO:0045947">
    <property type="term" value="P:negative regulation of translational initiation"/>
    <property type="evidence" value="ECO:0007669"/>
    <property type="project" value="UniProtKB-UniRule"/>
</dbReference>
<dbReference type="GO" id="GO:1902208">
    <property type="term" value="P:regulation of bacterial-type flagellum assembly"/>
    <property type="evidence" value="ECO:0007669"/>
    <property type="project" value="UniProtKB-UniRule"/>
</dbReference>
<dbReference type="GO" id="GO:0006109">
    <property type="term" value="P:regulation of carbohydrate metabolic process"/>
    <property type="evidence" value="ECO:0007669"/>
    <property type="project" value="InterPro"/>
</dbReference>
<dbReference type="FunFam" id="2.60.40.4380:FF:000002">
    <property type="entry name" value="Translational regulator CsrA"/>
    <property type="match status" value="1"/>
</dbReference>
<dbReference type="Gene3D" id="2.60.40.4380">
    <property type="entry name" value="Translational regulator CsrA"/>
    <property type="match status" value="1"/>
</dbReference>
<dbReference type="HAMAP" id="MF_00167">
    <property type="entry name" value="CsrA"/>
    <property type="match status" value="1"/>
</dbReference>
<dbReference type="InterPro" id="IPR003751">
    <property type="entry name" value="CsrA"/>
</dbReference>
<dbReference type="InterPro" id="IPR036107">
    <property type="entry name" value="CsrA_sf"/>
</dbReference>
<dbReference type="PANTHER" id="PTHR34984">
    <property type="entry name" value="CARBON STORAGE REGULATOR"/>
    <property type="match status" value="1"/>
</dbReference>
<dbReference type="PANTHER" id="PTHR34984:SF1">
    <property type="entry name" value="CARBON STORAGE REGULATOR"/>
    <property type="match status" value="1"/>
</dbReference>
<dbReference type="Pfam" id="PF02599">
    <property type="entry name" value="CsrA"/>
    <property type="match status" value="1"/>
</dbReference>
<dbReference type="SUPFAM" id="SSF117130">
    <property type="entry name" value="CsrA-like"/>
    <property type="match status" value="1"/>
</dbReference>
<name>CSRA_PSECP</name>
<keyword id="KW-1005">Bacterial flagellum biogenesis</keyword>
<keyword id="KW-0963">Cytoplasm</keyword>
<keyword id="KW-0678">Repressor</keyword>
<keyword id="KW-0694">RNA-binding</keyword>
<keyword id="KW-0810">Translation regulation</keyword>
<reference key="1">
    <citation type="submission" date="2009-01" db="EMBL/GenBank/DDBJ databases">
        <title>Complete sequence of chromosome of Arthrobacter chlorophenolicus A6.</title>
        <authorList>
            <consortium name="US DOE Joint Genome Institute"/>
            <person name="Lucas S."/>
            <person name="Copeland A."/>
            <person name="Lapidus A."/>
            <person name="Glavina del Rio T."/>
            <person name="Tice H."/>
            <person name="Bruce D."/>
            <person name="Goodwin L."/>
            <person name="Pitluck S."/>
            <person name="Goltsman E."/>
            <person name="Clum A."/>
            <person name="Larimer F."/>
            <person name="Land M."/>
            <person name="Hauser L."/>
            <person name="Kyrpides N."/>
            <person name="Mikhailova N."/>
            <person name="Jansson J."/>
            <person name="Richardson P."/>
        </authorList>
    </citation>
    <scope>NUCLEOTIDE SEQUENCE [LARGE SCALE GENOMIC DNA]</scope>
    <source>
        <strain>ATCC 700700 / DSM 12829 / CIP 107037 / JCM 12360 / KCTC 9906 / NCIMB 13794 / A6</strain>
    </source>
</reference>
<sequence length="77" mass="8007">MLVLTRKPGEKIMIGDDIVITVMEGRGDGVRIGIEAPRGVTIQRSEVVEAIAAANVAASQAGPETEELLKSILPPAG</sequence>